<protein>
    <recommendedName>
        <fullName>Alkyl hydroperoxide reductase C</fullName>
        <ecNumber evidence="2">1.11.1.26</ecNumber>
    </recommendedName>
    <alternativeName>
        <fullName>Alkyl hydroperoxide reductase protein C22</fullName>
    </alternativeName>
    <alternativeName>
        <fullName>Peroxiredoxin</fullName>
    </alternativeName>
    <alternativeName>
        <fullName>SCRP-23</fullName>
    </alternativeName>
    <alternativeName>
        <fullName>Sulfate starvation-induced protein 8</fullName>
        <shortName>SSI8</shortName>
    </alternativeName>
    <alternativeName>
        <fullName>Thioredoxin peroxidase</fullName>
    </alternativeName>
</protein>
<organism>
    <name type="scientific">Shigella flexneri</name>
    <dbReference type="NCBI Taxonomy" id="623"/>
    <lineage>
        <taxon>Bacteria</taxon>
        <taxon>Pseudomonadati</taxon>
        <taxon>Pseudomonadota</taxon>
        <taxon>Gammaproteobacteria</taxon>
        <taxon>Enterobacterales</taxon>
        <taxon>Enterobacteriaceae</taxon>
        <taxon>Shigella</taxon>
    </lineage>
</organism>
<dbReference type="EC" id="1.11.1.26" evidence="2"/>
<dbReference type="EMBL" id="AE005674">
    <property type="protein sequence ID" value="AAN42170.1"/>
    <property type="molecule type" value="Genomic_DNA"/>
</dbReference>
<dbReference type="EMBL" id="AE014073">
    <property type="protein sequence ID" value="AAP16040.1"/>
    <property type="molecule type" value="Genomic_DNA"/>
</dbReference>
<dbReference type="RefSeq" id="NP_706463.1">
    <property type="nucleotide sequence ID" value="NC_004337.2"/>
</dbReference>
<dbReference type="RefSeq" id="WP_000052796.1">
    <property type="nucleotide sequence ID" value="NZ_WPGW01000089.1"/>
</dbReference>
<dbReference type="SMR" id="P0AE11"/>
<dbReference type="STRING" id="198214.SF0524"/>
<dbReference type="PaxDb" id="198214-SF0524"/>
<dbReference type="GeneID" id="1023440"/>
<dbReference type="GeneID" id="93776879"/>
<dbReference type="KEGG" id="sfl:SF0524"/>
<dbReference type="KEGG" id="sfx:S0529"/>
<dbReference type="PATRIC" id="fig|198214.7.peg.609"/>
<dbReference type="HOGENOM" id="CLU_042529_21_3_6"/>
<dbReference type="Proteomes" id="UP000001006">
    <property type="component" value="Chromosome"/>
</dbReference>
<dbReference type="Proteomes" id="UP000002673">
    <property type="component" value="Chromosome"/>
</dbReference>
<dbReference type="GO" id="GO:0005829">
    <property type="term" value="C:cytosol"/>
    <property type="evidence" value="ECO:0007669"/>
    <property type="project" value="TreeGrafter"/>
</dbReference>
<dbReference type="GO" id="GO:0102039">
    <property type="term" value="F:NADH-dependent peroxiredoxin activity"/>
    <property type="evidence" value="ECO:0007669"/>
    <property type="project" value="UniProtKB-EC"/>
</dbReference>
<dbReference type="GO" id="GO:0008379">
    <property type="term" value="F:thioredoxin peroxidase activity"/>
    <property type="evidence" value="ECO:0007669"/>
    <property type="project" value="TreeGrafter"/>
</dbReference>
<dbReference type="GO" id="GO:0045454">
    <property type="term" value="P:cell redox homeostasis"/>
    <property type="evidence" value="ECO:0007669"/>
    <property type="project" value="TreeGrafter"/>
</dbReference>
<dbReference type="GO" id="GO:0033554">
    <property type="term" value="P:cellular response to stress"/>
    <property type="evidence" value="ECO:0007669"/>
    <property type="project" value="TreeGrafter"/>
</dbReference>
<dbReference type="GO" id="GO:0042744">
    <property type="term" value="P:hydrogen peroxide catabolic process"/>
    <property type="evidence" value="ECO:0007669"/>
    <property type="project" value="TreeGrafter"/>
</dbReference>
<dbReference type="GO" id="GO:0006979">
    <property type="term" value="P:response to oxidative stress"/>
    <property type="evidence" value="ECO:0007669"/>
    <property type="project" value="InterPro"/>
</dbReference>
<dbReference type="CDD" id="cd03015">
    <property type="entry name" value="PRX_Typ2cys"/>
    <property type="match status" value="1"/>
</dbReference>
<dbReference type="FunFam" id="3.40.30.10:FF:000002">
    <property type="entry name" value="Alkyl hydroperoxide reductase C"/>
    <property type="match status" value="1"/>
</dbReference>
<dbReference type="Gene3D" id="3.40.30.10">
    <property type="entry name" value="Glutaredoxin"/>
    <property type="match status" value="1"/>
</dbReference>
<dbReference type="InterPro" id="IPR017559">
    <property type="entry name" value="AhpC"/>
</dbReference>
<dbReference type="InterPro" id="IPR000866">
    <property type="entry name" value="AhpC/TSA"/>
</dbReference>
<dbReference type="InterPro" id="IPR050217">
    <property type="entry name" value="Peroxiredoxin"/>
</dbReference>
<dbReference type="InterPro" id="IPR024706">
    <property type="entry name" value="Peroxiredoxin_AhpC-typ"/>
</dbReference>
<dbReference type="InterPro" id="IPR019479">
    <property type="entry name" value="Peroxiredoxin_C"/>
</dbReference>
<dbReference type="InterPro" id="IPR036249">
    <property type="entry name" value="Thioredoxin-like_sf"/>
</dbReference>
<dbReference type="InterPro" id="IPR013766">
    <property type="entry name" value="Thioredoxin_domain"/>
</dbReference>
<dbReference type="NCBIfam" id="TIGR03137">
    <property type="entry name" value="AhpC"/>
    <property type="match status" value="1"/>
</dbReference>
<dbReference type="PANTHER" id="PTHR10681:SF121">
    <property type="entry name" value="ALKYL HYDROPEROXIDE REDUCTASE C"/>
    <property type="match status" value="1"/>
</dbReference>
<dbReference type="PANTHER" id="PTHR10681">
    <property type="entry name" value="THIOREDOXIN PEROXIDASE"/>
    <property type="match status" value="1"/>
</dbReference>
<dbReference type="Pfam" id="PF10417">
    <property type="entry name" value="1-cysPrx_C"/>
    <property type="match status" value="1"/>
</dbReference>
<dbReference type="Pfam" id="PF00578">
    <property type="entry name" value="AhpC-TSA"/>
    <property type="match status" value="1"/>
</dbReference>
<dbReference type="PIRSF" id="PIRSF000239">
    <property type="entry name" value="AHPC"/>
    <property type="match status" value="1"/>
</dbReference>
<dbReference type="SUPFAM" id="SSF52833">
    <property type="entry name" value="Thioredoxin-like"/>
    <property type="match status" value="1"/>
</dbReference>
<dbReference type="PROSITE" id="PS51352">
    <property type="entry name" value="THIOREDOXIN_2"/>
    <property type="match status" value="1"/>
</dbReference>
<reference key="1">
    <citation type="journal article" date="2002" name="Nucleic Acids Res.">
        <title>Genome sequence of Shigella flexneri 2a: insights into pathogenicity through comparison with genomes of Escherichia coli K12 and O157.</title>
        <authorList>
            <person name="Jin Q."/>
            <person name="Yuan Z."/>
            <person name="Xu J."/>
            <person name="Wang Y."/>
            <person name="Shen Y."/>
            <person name="Lu W."/>
            <person name="Wang J."/>
            <person name="Liu H."/>
            <person name="Yang J."/>
            <person name="Yang F."/>
            <person name="Zhang X."/>
            <person name="Zhang J."/>
            <person name="Yang G."/>
            <person name="Wu H."/>
            <person name="Qu D."/>
            <person name="Dong J."/>
            <person name="Sun L."/>
            <person name="Xue Y."/>
            <person name="Zhao A."/>
            <person name="Gao Y."/>
            <person name="Zhu J."/>
            <person name="Kan B."/>
            <person name="Ding K."/>
            <person name="Chen S."/>
            <person name="Cheng H."/>
            <person name="Yao Z."/>
            <person name="He B."/>
            <person name="Chen R."/>
            <person name="Ma D."/>
            <person name="Qiang B."/>
            <person name="Wen Y."/>
            <person name="Hou Y."/>
            <person name="Yu J."/>
        </authorList>
    </citation>
    <scope>NUCLEOTIDE SEQUENCE [LARGE SCALE GENOMIC DNA]</scope>
    <source>
        <strain>301 / Serotype 2a</strain>
    </source>
</reference>
<reference key="2">
    <citation type="journal article" date="2003" name="Infect. Immun.">
        <title>Complete genome sequence and comparative genomics of Shigella flexneri serotype 2a strain 2457T.</title>
        <authorList>
            <person name="Wei J."/>
            <person name="Goldberg M.B."/>
            <person name="Burland V."/>
            <person name="Venkatesan M.M."/>
            <person name="Deng W."/>
            <person name="Fournier G."/>
            <person name="Mayhew G.F."/>
            <person name="Plunkett G. III"/>
            <person name="Rose D.J."/>
            <person name="Darling A."/>
            <person name="Mau B."/>
            <person name="Perna N.T."/>
            <person name="Payne S.M."/>
            <person name="Runyen-Janecky L.J."/>
            <person name="Zhou S."/>
            <person name="Schwartz D.C."/>
            <person name="Blattner F.R."/>
        </authorList>
    </citation>
    <scope>NUCLEOTIDE SEQUENCE [LARGE SCALE GENOMIC DNA]</scope>
    <source>
        <strain>ATCC 700930 / 2457T / Serotype 2a</strain>
    </source>
</reference>
<proteinExistence type="inferred from homology"/>
<evidence type="ECO:0000250" key="1"/>
<evidence type="ECO:0000250" key="2">
    <source>
        <dbReference type="UniProtKB" id="P0A251"/>
    </source>
</evidence>
<evidence type="ECO:0000250" key="3">
    <source>
        <dbReference type="UniProtKB" id="P0AE08"/>
    </source>
</evidence>
<evidence type="ECO:0000255" key="4">
    <source>
        <dbReference type="PROSITE-ProRule" id="PRU00691"/>
    </source>
</evidence>
<evidence type="ECO:0000305" key="5"/>
<feature type="initiator methionine" description="Removed" evidence="1">
    <location>
        <position position="1"/>
    </location>
</feature>
<feature type="chain" id="PRO_0000135121" description="Alkyl hydroperoxide reductase C">
    <location>
        <begin position="2"/>
        <end position="187"/>
    </location>
</feature>
<feature type="domain" description="Thioredoxin" evidence="4">
    <location>
        <begin position="2"/>
        <end position="157"/>
    </location>
</feature>
<feature type="active site" description="Cysteine sulfenic acid (-SOH) intermediate" evidence="2">
    <location>
        <position position="47"/>
    </location>
</feature>
<feature type="modified residue" description="N6-acetyllysine" evidence="1">
    <location>
        <position position="17"/>
    </location>
</feature>
<feature type="modified residue" description="N6-acetyllysine" evidence="1">
    <location>
        <position position="93"/>
    </location>
</feature>
<feature type="modified residue" description="N6-acetyllysine" evidence="1">
    <location>
        <position position="153"/>
    </location>
</feature>
<feature type="modified residue" description="N6-acetyllysine" evidence="1">
    <location>
        <position position="169"/>
    </location>
</feature>
<feature type="modified residue" description="N6-acetyllysine" evidence="1">
    <location>
        <position position="171"/>
    </location>
</feature>
<feature type="disulfide bond" description="Interchain (with C-166); in linked form" evidence="2">
    <location>
        <position position="47"/>
    </location>
</feature>
<feature type="disulfide bond" description="Interchain (with C-47); in linked form" evidence="2">
    <location>
        <position position="166"/>
    </location>
</feature>
<keyword id="KW-0007">Acetylation</keyword>
<keyword id="KW-0049">Antioxidant</keyword>
<keyword id="KW-0963">Cytoplasm</keyword>
<keyword id="KW-1015">Disulfide bond</keyword>
<keyword id="KW-0560">Oxidoreductase</keyword>
<keyword id="KW-0575">Peroxidase</keyword>
<keyword id="KW-0676">Redox-active center</keyword>
<keyword id="KW-1185">Reference proteome</keyword>
<comment type="function">
    <text evidence="2">Thiol-specific peroxidase that catalyzes the reduction of hydrogen peroxide and organic hydroperoxides to water and alcohols, respectively. Plays a role in cell protection against oxidative stress by detoxifying peroxides.</text>
</comment>
<comment type="catalytic activity">
    <reaction evidence="2">
        <text>a hydroperoxide + NADH + H(+) = an alcohol + NAD(+) + H2O</text>
        <dbReference type="Rhea" id="RHEA:62628"/>
        <dbReference type="ChEBI" id="CHEBI:15377"/>
        <dbReference type="ChEBI" id="CHEBI:15378"/>
        <dbReference type="ChEBI" id="CHEBI:30879"/>
        <dbReference type="ChEBI" id="CHEBI:35924"/>
        <dbReference type="ChEBI" id="CHEBI:57540"/>
        <dbReference type="ChEBI" id="CHEBI:57945"/>
        <dbReference type="EC" id="1.11.1.26"/>
    </reaction>
</comment>
<comment type="subunit">
    <text evidence="2">Homodimer; disulfide-linked, upon oxidation. 5 homodimers assemble to form a ring-like decamer.</text>
</comment>
<comment type="subcellular location">
    <subcellularLocation>
        <location evidence="3">Cytoplasm</location>
    </subcellularLocation>
</comment>
<comment type="miscellaneous">
    <text evidence="2">The active site is a conserved redox-active cysteine residue, the peroxidatic cysteine (C(P)), which makes the nucleophilic attack on the peroxide substrate. The peroxide oxidizes the C(P)-SH to cysteine sulfenic acid (C(P)-SOH), which then reacts with another cysteine residue, the resolving cysteine (C(R)), to form a disulfide bridge. The disulfide is subsequently reduced by an appropriate electron donor to complete the catalytic cycle. In this typical 2-Cys peroxiredoxin, C(R) is provided by the other dimeric subunit to form an intersubunit disulfide. The disulfide is subsequently reduced by AhpF.</text>
</comment>
<comment type="similarity">
    <text evidence="5">Belongs to the peroxiredoxin family. AhpC/Prx1 subfamily.</text>
</comment>
<name>AHPC_SHIFL</name>
<sequence>MSLINTKIKPFKNQAFKNGEFIEITEKDTEGRWSVFFFYPADFTFVCPTELGDVADHYEELQKLGVDVYAVSTDTHFTHKAWHSSSETIAKIKYAMIGDPTGALTRNFDNMREDEGLADRATFVVDPQGIIQAIEVTAEGIGRDASDLLRKIKAAQYVASHPGEVCPAKWKEGEATLAPSLDLVGKI</sequence>
<gene>
    <name type="primary">ahpC</name>
    <name type="ordered locus">SF0524</name>
    <name type="ordered locus">S0529</name>
</gene>
<accession>P0AE11</accession>
<accession>P26427</accession>